<evidence type="ECO:0000250" key="1"/>
<evidence type="ECO:0000250" key="2">
    <source>
        <dbReference type="UniProtKB" id="B9EHT4"/>
    </source>
</evidence>
<evidence type="ECO:0000250" key="3">
    <source>
        <dbReference type="UniProtKB" id="Q96DZ5"/>
    </source>
</evidence>
<evidence type="ECO:0000255" key="4">
    <source>
        <dbReference type="PROSITE-ProRule" id="PRU00045"/>
    </source>
</evidence>
<evidence type="ECO:0000256" key="5">
    <source>
        <dbReference type="SAM" id="MobiDB-lite"/>
    </source>
</evidence>
<reference key="1">
    <citation type="submission" date="2004-11" db="EMBL/GenBank/DDBJ databases">
        <authorList>
            <consortium name="The German cDNA consortium"/>
        </authorList>
    </citation>
    <scope>NUCLEOTIDE SEQUENCE [LARGE SCALE MRNA]</scope>
    <source>
        <tissue>Brain cortex</tissue>
    </source>
</reference>
<organism>
    <name type="scientific">Pongo abelii</name>
    <name type="common">Sumatran orangutan</name>
    <name type="synonym">Pongo pygmaeus abelii</name>
    <dbReference type="NCBI Taxonomy" id="9601"/>
    <lineage>
        <taxon>Eukaryota</taxon>
        <taxon>Metazoa</taxon>
        <taxon>Chordata</taxon>
        <taxon>Craniata</taxon>
        <taxon>Vertebrata</taxon>
        <taxon>Euteleostomi</taxon>
        <taxon>Mammalia</taxon>
        <taxon>Eutheria</taxon>
        <taxon>Euarchontoglires</taxon>
        <taxon>Primates</taxon>
        <taxon>Haplorrhini</taxon>
        <taxon>Catarrhini</taxon>
        <taxon>Hominidae</taxon>
        <taxon>Pongo</taxon>
    </lineage>
</organism>
<gene>
    <name type="primary">CLIP3</name>
    <name type="synonym">CLIPR59</name>
</gene>
<sequence length="547" mass="59659">MTKTDPAPMAPPPRGEEEEEEEEDEPVPEAPSPTQERRQKPVVHPSAPAPLPKDYAFTFFDPNDPACQEILFDPQTTIPELFAIVRQWVPQVQHKIDVIGNEILRRGCHVNDRDGLTDMTLLHYACKAGAHGVGDPAAAVRLSQQLLALGADVTLRSRWTNMNALHYAAYFDVPDLVRVLLKGARPRVVNSTCSDFNHGSALHIAASSLCLGAAKCLLEHGANPALRNRKGQVPAEVVPDPMDMSLDKAEAALVAKELRTLLEEAVPLSCALPKVTLPNYDNVPGNLMLSALGLRLGDRVLLDGQKTGTLRFCGTTEFASGQWVGVELDEPEGKNDGSVGGVRYFICPPKQGLFASVSKISKAVDAPPSSVTSTPRTPRMDFSRVTGKGRREHKGKKKTPSSPSLGSLQQRDRAKAEVGDQVLVAGQKQGIVRFYGKTDFAPGYWYGIELDQPTGKHDGSVFGVRYFTCPPRHGVFAPASRIQRIGGSTDSPGDSVGAKKVHQVTMTQPKRTFTTVRTPKDIASENSISRLLFCCWFPWMLRAEMQS</sequence>
<name>CLIP3_PONAB</name>
<keyword id="KW-0040">ANK repeat</keyword>
<keyword id="KW-1003">Cell membrane</keyword>
<keyword id="KW-0963">Cytoplasm</keyword>
<keyword id="KW-0333">Golgi apparatus</keyword>
<keyword id="KW-0449">Lipoprotein</keyword>
<keyword id="KW-0472">Membrane</keyword>
<keyword id="KW-0564">Palmitate</keyword>
<keyword id="KW-0597">Phosphoprotein</keyword>
<keyword id="KW-1185">Reference proteome</keyword>
<keyword id="KW-0677">Repeat</keyword>
<comment type="function">
    <text evidence="1">Functions as a cytoplasmic linker protein. Involved in TGN-endosome dynamics. May modulate the cellular compartmentalization of AKT kinase family and promote its cell membrane localization, thereby playing a role in glucose transport in adipocytes (By similarity).</text>
</comment>
<comment type="subunit">
    <text evidence="3">Homodimer. Interacts with AKT1 and AKT2; when AKT1 and AKT2 are phosphorylated and activated, affinity is higher for AKT2. Interacts with ZDHHC13 (via ANK repeats). Interacts with ZDHHC17 (via ANK repeats).</text>
</comment>
<comment type="subcellular location">
    <subcellularLocation>
        <location evidence="1">Cell membrane</location>
        <topology evidence="1">Lipid-anchor</topology>
    </subcellularLocation>
    <subcellularLocation>
        <location evidence="1">Cytoplasm</location>
    </subcellularLocation>
    <subcellularLocation>
        <location evidence="1">Golgi apparatus</location>
        <location evidence="1">Golgi stack</location>
    </subcellularLocation>
    <text evidence="1">Localized to Golgi stacks as well as on tubulovesicular elements juxtaposed to Golgi cisternae.</text>
</comment>
<comment type="domain">
    <text evidence="1">Microtubule association is inhibited by the ANK repeats and the Golgi localization region (GoLD).</text>
</comment>
<comment type="PTM">
    <text evidence="1">Palmitoylation by ZDHHC17 regulates association with the plasma membrane.</text>
</comment>
<comment type="miscellaneous">
    <text evidence="1">The N-terminal half is dispensable for proper Golgi targeting, whereas the GoLD region is required.</text>
</comment>
<proteinExistence type="evidence at transcript level"/>
<protein>
    <recommendedName>
        <fullName>CAP-Gly domain-containing linker protein 3</fullName>
    </recommendedName>
    <alternativeName>
        <fullName>Cytoplasmic linker protein 170-related 59 kDa protein</fullName>
        <shortName>CLIP-170-related 59 kDa protein</shortName>
        <shortName>CLIPR-59</shortName>
    </alternativeName>
</protein>
<feature type="chain" id="PRO_0000076213" description="CAP-Gly domain-containing linker protein 3">
    <location>
        <begin position="1"/>
        <end position="547"/>
    </location>
</feature>
<feature type="repeat" description="ANK 1">
    <location>
        <begin position="117"/>
        <end position="155"/>
    </location>
</feature>
<feature type="repeat" description="ANK 2">
    <location>
        <begin position="160"/>
        <end position="189"/>
    </location>
</feature>
<feature type="repeat" description="ANK 3">
    <location>
        <begin position="197"/>
        <end position="226"/>
    </location>
</feature>
<feature type="domain" description="CAP-Gly 1" evidence="4">
    <location>
        <begin position="314"/>
        <end position="356"/>
    </location>
</feature>
<feature type="domain" description="CAP-Gly 2" evidence="4">
    <location>
        <begin position="436"/>
        <end position="478"/>
    </location>
</feature>
<feature type="region of interest" description="Disordered" evidence="5">
    <location>
        <begin position="1"/>
        <end position="49"/>
    </location>
</feature>
<feature type="region of interest" description="Disordered" evidence="5">
    <location>
        <begin position="365"/>
        <end position="413"/>
    </location>
</feature>
<feature type="region of interest" description="GoLD">
    <location>
        <begin position="488"/>
        <end position="547"/>
    </location>
</feature>
<feature type="compositionally biased region" description="Acidic residues" evidence="5">
    <location>
        <begin position="16"/>
        <end position="27"/>
    </location>
</feature>
<feature type="compositionally biased region" description="Low complexity" evidence="5">
    <location>
        <begin position="367"/>
        <end position="377"/>
    </location>
</feature>
<feature type="compositionally biased region" description="Basic residues" evidence="5">
    <location>
        <begin position="387"/>
        <end position="399"/>
    </location>
</feature>
<feature type="compositionally biased region" description="Polar residues" evidence="5">
    <location>
        <begin position="400"/>
        <end position="409"/>
    </location>
</feature>
<feature type="modified residue" description="Phosphothreonine" evidence="2">
    <location>
        <position position="374"/>
    </location>
</feature>
<feature type="modified residue" description="Phosphoserine" evidence="2">
    <location>
        <position position="401"/>
    </location>
</feature>
<feature type="lipid moiety-binding region" description="S-palmitoyl cysteine" evidence="1">
    <location>
        <position position="534"/>
    </location>
</feature>
<feature type="lipid moiety-binding region" description="S-palmitoyl cysteine" evidence="1">
    <location>
        <position position="535"/>
    </location>
</feature>
<accession>Q5R686</accession>
<dbReference type="EMBL" id="CR860608">
    <property type="protein sequence ID" value="CAH92730.1"/>
    <property type="molecule type" value="mRNA"/>
</dbReference>
<dbReference type="RefSeq" id="NP_001126592.1">
    <property type="nucleotide sequence ID" value="NM_001133120.1"/>
</dbReference>
<dbReference type="SMR" id="Q5R686"/>
<dbReference type="STRING" id="9601.ENSPPYP00000011075"/>
<dbReference type="GeneID" id="100173588"/>
<dbReference type="KEGG" id="pon:100173588"/>
<dbReference type="CTD" id="25999"/>
<dbReference type="eggNOG" id="KOG4568">
    <property type="taxonomic scope" value="Eukaryota"/>
</dbReference>
<dbReference type="InParanoid" id="Q5R686"/>
<dbReference type="OrthoDB" id="2130750at2759"/>
<dbReference type="Proteomes" id="UP000001595">
    <property type="component" value="Unplaced"/>
</dbReference>
<dbReference type="GO" id="GO:0005938">
    <property type="term" value="C:cell cortex"/>
    <property type="evidence" value="ECO:0007669"/>
    <property type="project" value="TreeGrafter"/>
</dbReference>
<dbReference type="GO" id="GO:0031901">
    <property type="term" value="C:early endosome membrane"/>
    <property type="evidence" value="ECO:0000250"/>
    <property type="project" value="UniProtKB"/>
</dbReference>
<dbReference type="GO" id="GO:0005795">
    <property type="term" value="C:Golgi stack"/>
    <property type="evidence" value="ECO:0007669"/>
    <property type="project" value="UniProtKB-SubCell"/>
</dbReference>
<dbReference type="GO" id="GO:0045121">
    <property type="term" value="C:membrane raft"/>
    <property type="evidence" value="ECO:0000250"/>
    <property type="project" value="UniProtKB"/>
</dbReference>
<dbReference type="GO" id="GO:0035371">
    <property type="term" value="C:microtubule plus-end"/>
    <property type="evidence" value="ECO:0007669"/>
    <property type="project" value="TreeGrafter"/>
</dbReference>
<dbReference type="GO" id="GO:0005634">
    <property type="term" value="C:nucleus"/>
    <property type="evidence" value="ECO:0007669"/>
    <property type="project" value="TreeGrafter"/>
</dbReference>
<dbReference type="GO" id="GO:0005886">
    <property type="term" value="C:plasma membrane"/>
    <property type="evidence" value="ECO:0000250"/>
    <property type="project" value="UniProtKB"/>
</dbReference>
<dbReference type="GO" id="GO:0055038">
    <property type="term" value="C:recycling endosome membrane"/>
    <property type="evidence" value="ECO:0000250"/>
    <property type="project" value="UniProtKB"/>
</dbReference>
<dbReference type="GO" id="GO:0005802">
    <property type="term" value="C:trans-Golgi network"/>
    <property type="evidence" value="ECO:0000250"/>
    <property type="project" value="UniProtKB"/>
</dbReference>
<dbReference type="GO" id="GO:0032588">
    <property type="term" value="C:trans-Golgi network membrane"/>
    <property type="evidence" value="ECO:0000250"/>
    <property type="project" value="UniProtKB"/>
</dbReference>
<dbReference type="GO" id="GO:0035594">
    <property type="term" value="F:ganglioside binding"/>
    <property type="evidence" value="ECO:0000250"/>
    <property type="project" value="UniProtKB"/>
</dbReference>
<dbReference type="GO" id="GO:0008017">
    <property type="term" value="F:microtubule binding"/>
    <property type="evidence" value="ECO:0000250"/>
    <property type="project" value="UniProtKB"/>
</dbReference>
<dbReference type="GO" id="GO:0051010">
    <property type="term" value="F:microtubule plus-end binding"/>
    <property type="evidence" value="ECO:0007669"/>
    <property type="project" value="TreeGrafter"/>
</dbReference>
<dbReference type="GO" id="GO:0031122">
    <property type="term" value="P:cytoplasmic microtubule organization"/>
    <property type="evidence" value="ECO:0007669"/>
    <property type="project" value="TreeGrafter"/>
</dbReference>
<dbReference type="GO" id="GO:0045444">
    <property type="term" value="P:fat cell differentiation"/>
    <property type="evidence" value="ECO:0000250"/>
    <property type="project" value="UniProtKB"/>
</dbReference>
<dbReference type="GO" id="GO:0044091">
    <property type="term" value="P:membrane biogenesis"/>
    <property type="evidence" value="ECO:0000250"/>
    <property type="project" value="UniProtKB"/>
</dbReference>
<dbReference type="GO" id="GO:0031115">
    <property type="term" value="P:negative regulation of microtubule polymerization"/>
    <property type="evidence" value="ECO:0000250"/>
    <property type="project" value="UniProtKB"/>
</dbReference>
<dbReference type="GO" id="GO:0018230">
    <property type="term" value="P:peptidyl-L-cysteine S-palmitoylation"/>
    <property type="evidence" value="ECO:0000250"/>
    <property type="project" value="UniProtKB"/>
</dbReference>
<dbReference type="GO" id="GO:0043065">
    <property type="term" value="P:positive regulation of apoptotic process"/>
    <property type="evidence" value="ECO:0000250"/>
    <property type="project" value="UniProtKB"/>
</dbReference>
<dbReference type="GO" id="GO:0010828">
    <property type="term" value="P:positive regulation of D-glucose transmembrane transport"/>
    <property type="evidence" value="ECO:0000250"/>
    <property type="project" value="UniProtKB"/>
</dbReference>
<dbReference type="GO" id="GO:0045807">
    <property type="term" value="P:positive regulation of endocytosis"/>
    <property type="evidence" value="ECO:0000250"/>
    <property type="project" value="UniProtKB"/>
</dbReference>
<dbReference type="GO" id="GO:1903078">
    <property type="term" value="P:positive regulation of protein localization to plasma membrane"/>
    <property type="evidence" value="ECO:0000250"/>
    <property type="project" value="UniProtKB"/>
</dbReference>
<dbReference type="GO" id="GO:0001934">
    <property type="term" value="P:positive regulation of protein phosphorylation"/>
    <property type="evidence" value="ECO:0000250"/>
    <property type="project" value="UniProtKB"/>
</dbReference>
<dbReference type="GO" id="GO:0098840">
    <property type="term" value="P:protein transport along microtubule"/>
    <property type="evidence" value="ECO:0000250"/>
    <property type="project" value="UniProtKB"/>
</dbReference>
<dbReference type="FunFam" id="1.25.40.20:FF:000044">
    <property type="entry name" value="CAP-Gly domain containing linker protein 3"/>
    <property type="match status" value="1"/>
</dbReference>
<dbReference type="FunFam" id="2.30.30.190:FF:000005">
    <property type="entry name" value="CAP-Gly domain containing linker protein 3"/>
    <property type="match status" value="1"/>
</dbReference>
<dbReference type="Gene3D" id="1.25.40.20">
    <property type="entry name" value="Ankyrin repeat-containing domain"/>
    <property type="match status" value="1"/>
</dbReference>
<dbReference type="Gene3D" id="2.30.30.190">
    <property type="entry name" value="CAP Gly-rich-like domain"/>
    <property type="match status" value="2"/>
</dbReference>
<dbReference type="InterPro" id="IPR002110">
    <property type="entry name" value="Ankyrin_rpt"/>
</dbReference>
<dbReference type="InterPro" id="IPR036770">
    <property type="entry name" value="Ankyrin_rpt-contain_sf"/>
</dbReference>
<dbReference type="InterPro" id="IPR036859">
    <property type="entry name" value="CAP-Gly_dom_sf"/>
</dbReference>
<dbReference type="InterPro" id="IPR000938">
    <property type="entry name" value="CAP-Gly_domain"/>
</dbReference>
<dbReference type="PANTHER" id="PTHR18916:SF77">
    <property type="entry name" value="CAP-GLY DOMAIN-CONTAINING LINKER PROTEIN 3"/>
    <property type="match status" value="1"/>
</dbReference>
<dbReference type="PANTHER" id="PTHR18916">
    <property type="entry name" value="DYNACTIN 1-RELATED MICROTUBULE-BINDING"/>
    <property type="match status" value="1"/>
</dbReference>
<dbReference type="Pfam" id="PF12796">
    <property type="entry name" value="Ank_2"/>
    <property type="match status" value="1"/>
</dbReference>
<dbReference type="Pfam" id="PF01302">
    <property type="entry name" value="CAP_GLY"/>
    <property type="match status" value="2"/>
</dbReference>
<dbReference type="SMART" id="SM00248">
    <property type="entry name" value="ANK"/>
    <property type="match status" value="3"/>
</dbReference>
<dbReference type="SMART" id="SM01052">
    <property type="entry name" value="CAP_GLY"/>
    <property type="match status" value="2"/>
</dbReference>
<dbReference type="SUPFAM" id="SSF48403">
    <property type="entry name" value="Ankyrin repeat"/>
    <property type="match status" value="1"/>
</dbReference>
<dbReference type="SUPFAM" id="SSF74924">
    <property type="entry name" value="Cap-Gly domain"/>
    <property type="match status" value="2"/>
</dbReference>
<dbReference type="PROSITE" id="PS50297">
    <property type="entry name" value="ANK_REP_REGION"/>
    <property type="match status" value="1"/>
</dbReference>
<dbReference type="PROSITE" id="PS50088">
    <property type="entry name" value="ANK_REPEAT"/>
    <property type="match status" value="1"/>
</dbReference>
<dbReference type="PROSITE" id="PS00845">
    <property type="entry name" value="CAP_GLY_1"/>
    <property type="match status" value="2"/>
</dbReference>
<dbReference type="PROSITE" id="PS50245">
    <property type="entry name" value="CAP_GLY_2"/>
    <property type="match status" value="2"/>
</dbReference>